<proteinExistence type="inferred from homology"/>
<sequence length="347" mass="37725">MSDRKQALDMALRQIEKQFGKGSIMKMGENEIPKIATIPSGSLALDVALGIGGYPRGRVVEIYGPESSGKTTVALHAIAEAQKQGGQAAFIDAEHALDPVYAKALGVNIDELLLSQPDTGEQALEIAEALVRSGAVDIIVVDSVAALVPKAEIEGEMGDSHVGLQARLMSQALRKLSGAINKSKTTAIFINQIREKVGVMFGNPETTPGGRALKFYSSVRLEVRRAETLKLGNDAVGNKARIKVVKNKVAPPFKQAEVDIMYGKGISKEGEVLDIGSDLDIVMKSGAWYSYNNDRLGQGRENAKQYLKEHEEVLTEIHQSIRQHYELDKVDEDKTEEEASQESLDLK</sequence>
<dbReference type="EMBL" id="BA000028">
    <property type="protein sequence ID" value="BAC13580.1"/>
    <property type="molecule type" value="Genomic_DNA"/>
</dbReference>
<dbReference type="RefSeq" id="WP_011066024.1">
    <property type="nucleotide sequence ID" value="NC_004193.1"/>
</dbReference>
<dbReference type="SMR" id="Q8CXG7"/>
<dbReference type="STRING" id="221109.gene:10733864"/>
<dbReference type="KEGG" id="oih:OB1624"/>
<dbReference type="eggNOG" id="COG0468">
    <property type="taxonomic scope" value="Bacteria"/>
</dbReference>
<dbReference type="HOGENOM" id="CLU_040469_1_2_9"/>
<dbReference type="OrthoDB" id="9776733at2"/>
<dbReference type="PhylomeDB" id="Q8CXG7"/>
<dbReference type="Proteomes" id="UP000000822">
    <property type="component" value="Chromosome"/>
</dbReference>
<dbReference type="GO" id="GO:0005829">
    <property type="term" value="C:cytosol"/>
    <property type="evidence" value="ECO:0007669"/>
    <property type="project" value="TreeGrafter"/>
</dbReference>
<dbReference type="GO" id="GO:0005524">
    <property type="term" value="F:ATP binding"/>
    <property type="evidence" value="ECO:0007669"/>
    <property type="project" value="UniProtKB-UniRule"/>
</dbReference>
<dbReference type="GO" id="GO:0016887">
    <property type="term" value="F:ATP hydrolysis activity"/>
    <property type="evidence" value="ECO:0007669"/>
    <property type="project" value="InterPro"/>
</dbReference>
<dbReference type="GO" id="GO:0140664">
    <property type="term" value="F:ATP-dependent DNA damage sensor activity"/>
    <property type="evidence" value="ECO:0007669"/>
    <property type="project" value="InterPro"/>
</dbReference>
<dbReference type="GO" id="GO:0003684">
    <property type="term" value="F:damaged DNA binding"/>
    <property type="evidence" value="ECO:0007669"/>
    <property type="project" value="UniProtKB-UniRule"/>
</dbReference>
<dbReference type="GO" id="GO:0003697">
    <property type="term" value="F:single-stranded DNA binding"/>
    <property type="evidence" value="ECO:0007669"/>
    <property type="project" value="UniProtKB-UniRule"/>
</dbReference>
<dbReference type="GO" id="GO:0006310">
    <property type="term" value="P:DNA recombination"/>
    <property type="evidence" value="ECO:0007669"/>
    <property type="project" value="UniProtKB-UniRule"/>
</dbReference>
<dbReference type="GO" id="GO:0006281">
    <property type="term" value="P:DNA repair"/>
    <property type="evidence" value="ECO:0007669"/>
    <property type="project" value="UniProtKB-UniRule"/>
</dbReference>
<dbReference type="GO" id="GO:0009432">
    <property type="term" value="P:SOS response"/>
    <property type="evidence" value="ECO:0007669"/>
    <property type="project" value="UniProtKB-UniRule"/>
</dbReference>
<dbReference type="CDD" id="cd00983">
    <property type="entry name" value="RecA"/>
    <property type="match status" value="1"/>
</dbReference>
<dbReference type="FunFam" id="3.40.50.300:FF:000087">
    <property type="entry name" value="Recombinase RecA"/>
    <property type="match status" value="1"/>
</dbReference>
<dbReference type="Gene3D" id="3.40.50.300">
    <property type="entry name" value="P-loop containing nucleotide triphosphate hydrolases"/>
    <property type="match status" value="1"/>
</dbReference>
<dbReference type="HAMAP" id="MF_00268">
    <property type="entry name" value="RecA"/>
    <property type="match status" value="1"/>
</dbReference>
<dbReference type="InterPro" id="IPR003593">
    <property type="entry name" value="AAA+_ATPase"/>
</dbReference>
<dbReference type="InterPro" id="IPR013765">
    <property type="entry name" value="DNA_recomb/repair_RecA"/>
</dbReference>
<dbReference type="InterPro" id="IPR020584">
    <property type="entry name" value="DNA_recomb/repair_RecA_CS"/>
</dbReference>
<dbReference type="InterPro" id="IPR027417">
    <property type="entry name" value="P-loop_NTPase"/>
</dbReference>
<dbReference type="InterPro" id="IPR049261">
    <property type="entry name" value="RecA-like_C"/>
</dbReference>
<dbReference type="InterPro" id="IPR049428">
    <property type="entry name" value="RecA-like_N"/>
</dbReference>
<dbReference type="InterPro" id="IPR020588">
    <property type="entry name" value="RecA_ATP-bd"/>
</dbReference>
<dbReference type="InterPro" id="IPR023400">
    <property type="entry name" value="RecA_C_sf"/>
</dbReference>
<dbReference type="InterPro" id="IPR020587">
    <property type="entry name" value="RecA_monomer-monomer_interface"/>
</dbReference>
<dbReference type="NCBIfam" id="TIGR02012">
    <property type="entry name" value="tigrfam_recA"/>
    <property type="match status" value="1"/>
</dbReference>
<dbReference type="PANTHER" id="PTHR45900:SF1">
    <property type="entry name" value="MITOCHONDRIAL DNA REPAIR PROTEIN RECA HOMOLOG-RELATED"/>
    <property type="match status" value="1"/>
</dbReference>
<dbReference type="PANTHER" id="PTHR45900">
    <property type="entry name" value="RECA"/>
    <property type="match status" value="1"/>
</dbReference>
<dbReference type="Pfam" id="PF00154">
    <property type="entry name" value="RecA"/>
    <property type="match status" value="1"/>
</dbReference>
<dbReference type="Pfam" id="PF21096">
    <property type="entry name" value="RecA_C"/>
    <property type="match status" value="1"/>
</dbReference>
<dbReference type="PRINTS" id="PR00142">
    <property type="entry name" value="RECA"/>
</dbReference>
<dbReference type="SMART" id="SM00382">
    <property type="entry name" value="AAA"/>
    <property type="match status" value="1"/>
</dbReference>
<dbReference type="SUPFAM" id="SSF52540">
    <property type="entry name" value="P-loop containing nucleoside triphosphate hydrolases"/>
    <property type="match status" value="1"/>
</dbReference>
<dbReference type="SUPFAM" id="SSF54752">
    <property type="entry name" value="RecA protein, C-terminal domain"/>
    <property type="match status" value="1"/>
</dbReference>
<dbReference type="PROSITE" id="PS00321">
    <property type="entry name" value="RECA_1"/>
    <property type="match status" value="1"/>
</dbReference>
<dbReference type="PROSITE" id="PS50162">
    <property type="entry name" value="RECA_2"/>
    <property type="match status" value="1"/>
</dbReference>
<dbReference type="PROSITE" id="PS50163">
    <property type="entry name" value="RECA_3"/>
    <property type="match status" value="1"/>
</dbReference>
<evidence type="ECO:0000255" key="1">
    <source>
        <dbReference type="HAMAP-Rule" id="MF_00268"/>
    </source>
</evidence>
<evidence type="ECO:0000256" key="2">
    <source>
        <dbReference type="SAM" id="MobiDB-lite"/>
    </source>
</evidence>
<reference key="1">
    <citation type="journal article" date="2002" name="Nucleic Acids Res.">
        <title>Genome sequence of Oceanobacillus iheyensis isolated from the Iheya Ridge and its unexpected adaptive capabilities to extreme environments.</title>
        <authorList>
            <person name="Takami H."/>
            <person name="Takaki Y."/>
            <person name="Uchiyama I."/>
        </authorList>
    </citation>
    <scope>NUCLEOTIDE SEQUENCE [LARGE SCALE GENOMIC DNA]</scope>
    <source>
        <strain>DSM 14371 / CIP 107618 / JCM 11309 / KCTC 3954 / HTE831</strain>
    </source>
</reference>
<keyword id="KW-0067">ATP-binding</keyword>
<keyword id="KW-0963">Cytoplasm</keyword>
<keyword id="KW-0227">DNA damage</keyword>
<keyword id="KW-0233">DNA recombination</keyword>
<keyword id="KW-0234">DNA repair</keyword>
<keyword id="KW-0238">DNA-binding</keyword>
<keyword id="KW-0547">Nucleotide-binding</keyword>
<keyword id="KW-1185">Reference proteome</keyword>
<keyword id="KW-0742">SOS response</keyword>
<comment type="function">
    <text evidence="1">Can catalyze the hydrolysis of ATP in the presence of single-stranded DNA, the ATP-dependent uptake of single-stranded DNA by duplex DNA, and the ATP-dependent hybridization of homologous single-stranded DNAs. It interacts with LexA causing its activation and leading to its autocatalytic cleavage.</text>
</comment>
<comment type="subcellular location">
    <subcellularLocation>
        <location evidence="1">Cytoplasm</location>
    </subcellularLocation>
</comment>
<comment type="similarity">
    <text evidence="1">Belongs to the RecA family.</text>
</comment>
<organism>
    <name type="scientific">Oceanobacillus iheyensis (strain DSM 14371 / CIP 107618 / JCM 11309 / KCTC 3954 / HTE831)</name>
    <dbReference type="NCBI Taxonomy" id="221109"/>
    <lineage>
        <taxon>Bacteria</taxon>
        <taxon>Bacillati</taxon>
        <taxon>Bacillota</taxon>
        <taxon>Bacilli</taxon>
        <taxon>Bacillales</taxon>
        <taxon>Bacillaceae</taxon>
        <taxon>Oceanobacillus</taxon>
    </lineage>
</organism>
<accession>Q8CXG7</accession>
<feature type="chain" id="PRO_0000122787" description="Protein RecA">
    <location>
        <begin position="1"/>
        <end position="347"/>
    </location>
</feature>
<feature type="region of interest" description="Disordered" evidence="2">
    <location>
        <begin position="328"/>
        <end position="347"/>
    </location>
</feature>
<feature type="binding site" evidence="1">
    <location>
        <begin position="64"/>
        <end position="71"/>
    </location>
    <ligand>
        <name>ATP</name>
        <dbReference type="ChEBI" id="CHEBI:30616"/>
    </ligand>
</feature>
<protein>
    <recommendedName>
        <fullName evidence="1">Protein RecA</fullName>
    </recommendedName>
    <alternativeName>
        <fullName evidence="1">Recombinase A</fullName>
    </alternativeName>
</protein>
<name>RECA_OCEIH</name>
<gene>
    <name evidence="1" type="primary">recA</name>
    <name type="ordered locus">OB1624</name>
</gene>